<comment type="function">
    <text evidence="1">Catalyzes the NADPH-dependent reduction of glutamyl-tRNA(Glu) to glutamate 1-semialdehyde (GSA).</text>
</comment>
<comment type="catalytic activity">
    <reaction evidence="1">
        <text>(S)-4-amino-5-oxopentanoate + tRNA(Glu) + NADP(+) = L-glutamyl-tRNA(Glu) + NADPH + H(+)</text>
        <dbReference type="Rhea" id="RHEA:12344"/>
        <dbReference type="Rhea" id="RHEA-COMP:9663"/>
        <dbReference type="Rhea" id="RHEA-COMP:9680"/>
        <dbReference type="ChEBI" id="CHEBI:15378"/>
        <dbReference type="ChEBI" id="CHEBI:57501"/>
        <dbReference type="ChEBI" id="CHEBI:57783"/>
        <dbReference type="ChEBI" id="CHEBI:58349"/>
        <dbReference type="ChEBI" id="CHEBI:78442"/>
        <dbReference type="ChEBI" id="CHEBI:78520"/>
        <dbReference type="EC" id="1.2.1.70"/>
    </reaction>
</comment>
<comment type="pathway">
    <text evidence="1">Porphyrin-containing compound metabolism; protoporphyrin-IX biosynthesis; 5-aminolevulinate from L-glutamyl-tRNA(Glu): step 1/2.</text>
</comment>
<comment type="subunit">
    <text evidence="1">Homodimer.</text>
</comment>
<comment type="domain">
    <text evidence="1">Possesses an unusual extended V-shaped dimeric structure with each monomer consisting of three distinct domains arranged along a curved 'spinal' alpha-helix. The N-terminal catalytic domain specifically recognizes the glutamate moiety of the substrate. The second domain is the NADPH-binding domain, and the third C-terminal domain is responsible for dimerization.</text>
</comment>
<comment type="miscellaneous">
    <text evidence="1">During catalysis, the active site Cys acts as a nucleophile attacking the alpha-carbonyl group of tRNA-bound glutamate with the formation of a thioester intermediate between enzyme and glutamate, and the concomitant release of tRNA(Glu). The thioester intermediate is finally reduced by direct hydride transfer from NADPH, to form the product GSA.</text>
</comment>
<comment type="similarity">
    <text evidence="1">Belongs to the glutamyl-tRNA reductase family.</text>
</comment>
<dbReference type="EC" id="1.2.1.70" evidence="1"/>
<dbReference type="EMBL" id="CP000479">
    <property type="protein sequence ID" value="ABK68678.1"/>
    <property type="molecule type" value="Genomic_DNA"/>
</dbReference>
<dbReference type="RefSeq" id="WP_003879324.1">
    <property type="nucleotide sequence ID" value="NC_008595.1"/>
</dbReference>
<dbReference type="SMR" id="A0QLI1"/>
<dbReference type="KEGG" id="mav:MAV_4640"/>
<dbReference type="HOGENOM" id="CLU_035113_2_2_11"/>
<dbReference type="UniPathway" id="UPA00251">
    <property type="reaction ID" value="UER00316"/>
</dbReference>
<dbReference type="Proteomes" id="UP000001574">
    <property type="component" value="Chromosome"/>
</dbReference>
<dbReference type="GO" id="GO:0008883">
    <property type="term" value="F:glutamyl-tRNA reductase activity"/>
    <property type="evidence" value="ECO:0007669"/>
    <property type="project" value="UniProtKB-UniRule"/>
</dbReference>
<dbReference type="GO" id="GO:0050661">
    <property type="term" value="F:NADP binding"/>
    <property type="evidence" value="ECO:0007669"/>
    <property type="project" value="InterPro"/>
</dbReference>
<dbReference type="GO" id="GO:0019353">
    <property type="term" value="P:protoporphyrinogen IX biosynthetic process from glutamate"/>
    <property type="evidence" value="ECO:0007669"/>
    <property type="project" value="TreeGrafter"/>
</dbReference>
<dbReference type="CDD" id="cd05213">
    <property type="entry name" value="NAD_bind_Glutamyl_tRNA_reduct"/>
    <property type="match status" value="1"/>
</dbReference>
<dbReference type="FunFam" id="3.30.460.30:FF:000001">
    <property type="entry name" value="Glutamyl-tRNA reductase"/>
    <property type="match status" value="1"/>
</dbReference>
<dbReference type="Gene3D" id="3.30.460.30">
    <property type="entry name" value="Glutamyl-tRNA reductase, N-terminal domain"/>
    <property type="match status" value="1"/>
</dbReference>
<dbReference type="Gene3D" id="3.40.50.720">
    <property type="entry name" value="NAD(P)-binding Rossmann-like Domain"/>
    <property type="match status" value="1"/>
</dbReference>
<dbReference type="HAMAP" id="MF_00087">
    <property type="entry name" value="Glu_tRNA_reductase"/>
    <property type="match status" value="1"/>
</dbReference>
<dbReference type="InterPro" id="IPR000343">
    <property type="entry name" value="4pyrrol_synth_GluRdtase"/>
</dbReference>
<dbReference type="InterPro" id="IPR015896">
    <property type="entry name" value="4pyrrol_synth_GluRdtase_dimer"/>
</dbReference>
<dbReference type="InterPro" id="IPR015895">
    <property type="entry name" value="4pyrrol_synth_GluRdtase_N"/>
</dbReference>
<dbReference type="InterPro" id="IPR018214">
    <property type="entry name" value="GluRdtase_CS"/>
</dbReference>
<dbReference type="InterPro" id="IPR036453">
    <property type="entry name" value="GluRdtase_dimer_dom_sf"/>
</dbReference>
<dbReference type="InterPro" id="IPR036343">
    <property type="entry name" value="GluRdtase_N_sf"/>
</dbReference>
<dbReference type="InterPro" id="IPR036291">
    <property type="entry name" value="NAD(P)-bd_dom_sf"/>
</dbReference>
<dbReference type="InterPro" id="IPR006151">
    <property type="entry name" value="Shikm_DH/Glu-tRNA_Rdtase"/>
</dbReference>
<dbReference type="NCBIfam" id="TIGR01035">
    <property type="entry name" value="hemA"/>
    <property type="match status" value="1"/>
</dbReference>
<dbReference type="NCBIfam" id="NF000744">
    <property type="entry name" value="PRK00045.1-3"/>
    <property type="match status" value="1"/>
</dbReference>
<dbReference type="PANTHER" id="PTHR43013">
    <property type="entry name" value="GLUTAMYL-TRNA REDUCTASE"/>
    <property type="match status" value="1"/>
</dbReference>
<dbReference type="PANTHER" id="PTHR43013:SF1">
    <property type="entry name" value="GLUTAMYL-TRNA REDUCTASE"/>
    <property type="match status" value="1"/>
</dbReference>
<dbReference type="Pfam" id="PF00745">
    <property type="entry name" value="GlutR_dimer"/>
    <property type="match status" value="1"/>
</dbReference>
<dbReference type="Pfam" id="PF05201">
    <property type="entry name" value="GlutR_N"/>
    <property type="match status" value="1"/>
</dbReference>
<dbReference type="Pfam" id="PF01488">
    <property type="entry name" value="Shikimate_DH"/>
    <property type="match status" value="1"/>
</dbReference>
<dbReference type="PIRSF" id="PIRSF000445">
    <property type="entry name" value="4pyrrol_synth_GluRdtase"/>
    <property type="match status" value="1"/>
</dbReference>
<dbReference type="SUPFAM" id="SSF69742">
    <property type="entry name" value="Glutamyl tRNA-reductase catalytic, N-terminal domain"/>
    <property type="match status" value="1"/>
</dbReference>
<dbReference type="SUPFAM" id="SSF69075">
    <property type="entry name" value="Glutamyl tRNA-reductase dimerization domain"/>
    <property type="match status" value="1"/>
</dbReference>
<dbReference type="SUPFAM" id="SSF51735">
    <property type="entry name" value="NAD(P)-binding Rossmann-fold domains"/>
    <property type="match status" value="1"/>
</dbReference>
<dbReference type="PROSITE" id="PS00747">
    <property type="entry name" value="GLUTR"/>
    <property type="match status" value="1"/>
</dbReference>
<organism>
    <name type="scientific">Mycobacterium avium (strain 104)</name>
    <dbReference type="NCBI Taxonomy" id="243243"/>
    <lineage>
        <taxon>Bacteria</taxon>
        <taxon>Bacillati</taxon>
        <taxon>Actinomycetota</taxon>
        <taxon>Actinomycetes</taxon>
        <taxon>Mycobacteriales</taxon>
        <taxon>Mycobacteriaceae</taxon>
        <taxon>Mycobacterium</taxon>
        <taxon>Mycobacterium avium complex (MAC)</taxon>
    </lineage>
</organism>
<evidence type="ECO:0000255" key="1">
    <source>
        <dbReference type="HAMAP-Rule" id="MF_00087"/>
    </source>
</evidence>
<protein>
    <recommendedName>
        <fullName evidence="1">Glutamyl-tRNA reductase</fullName>
        <shortName evidence="1">GluTR</shortName>
        <ecNumber evidence="1">1.2.1.70</ecNumber>
    </recommendedName>
</protein>
<sequence length="459" mass="47934">MSVLLFGVSHRSAPVSVLEQLSIDESDHGKIVDRVLQSPLVTEAMVLSTCNRVEVYAVVDAFHGGLAVIGQVLSDHSGMSMSDLTKYAYVRYSEAAVEHLFAVASGLDSAVIGEQQVLGQVRRAYATAETNRTVGRVLHELAQRALSVGKRVHSETAIDAAGASVVSVALDMADRRLGGLAGKTAVLVGAGAMGALAAAHLSRAGIGQVHVLNRSLSRAQRLVRKIRETGVRADALPLEHLADALAGADVVVSCTGAVSPVVSLADVHHALAAAGRSAADETAHPLVICDLGMPRDVDPAVAGLPGVWVVDVDRVQHEPSAHAAAADVDAARTIVATEVAAYLAGQRMAEVTPTVTALRQRAADVVEAELLRLDNRLPGLDSAHREEVARTVRRVVDKLLHAPTVRIKQLASAPGGDSYAEALRELFELDQTAVDAVAAGELPVIATGFDAGAPQQPTE</sequence>
<keyword id="KW-0521">NADP</keyword>
<keyword id="KW-0560">Oxidoreductase</keyword>
<keyword id="KW-0627">Porphyrin biosynthesis</keyword>
<reference key="1">
    <citation type="submission" date="2006-10" db="EMBL/GenBank/DDBJ databases">
        <authorList>
            <person name="Fleischmann R.D."/>
            <person name="Dodson R.J."/>
            <person name="Haft D.H."/>
            <person name="Merkel J.S."/>
            <person name="Nelson W.C."/>
            <person name="Fraser C.M."/>
        </authorList>
    </citation>
    <scope>NUCLEOTIDE SEQUENCE [LARGE SCALE GENOMIC DNA]</scope>
    <source>
        <strain>104</strain>
    </source>
</reference>
<accession>A0QLI1</accession>
<feature type="chain" id="PRO_0000335051" description="Glutamyl-tRNA reductase">
    <location>
        <begin position="1"/>
        <end position="459"/>
    </location>
</feature>
<feature type="active site" description="Nucleophile" evidence="1">
    <location>
        <position position="50"/>
    </location>
</feature>
<feature type="binding site" evidence="1">
    <location>
        <begin position="49"/>
        <end position="52"/>
    </location>
    <ligand>
        <name>substrate</name>
    </ligand>
</feature>
<feature type="binding site" evidence="1">
    <location>
        <position position="109"/>
    </location>
    <ligand>
        <name>substrate</name>
    </ligand>
</feature>
<feature type="binding site" evidence="1">
    <location>
        <begin position="114"/>
        <end position="116"/>
    </location>
    <ligand>
        <name>substrate</name>
    </ligand>
</feature>
<feature type="binding site" evidence="1">
    <location>
        <position position="120"/>
    </location>
    <ligand>
        <name>substrate</name>
    </ligand>
</feature>
<feature type="binding site" evidence="1">
    <location>
        <begin position="189"/>
        <end position="194"/>
    </location>
    <ligand>
        <name>NADP(+)</name>
        <dbReference type="ChEBI" id="CHEBI:58349"/>
    </ligand>
</feature>
<feature type="site" description="Important for activity" evidence="1">
    <location>
        <position position="99"/>
    </location>
</feature>
<name>HEM1_MYCA1</name>
<gene>
    <name evidence="1" type="primary">hemA</name>
    <name type="ordered locus">MAV_4640</name>
</gene>
<proteinExistence type="inferred from homology"/>